<feature type="chain" id="PRO_0000115365" description="Uncharacterized protein UL130">
    <location>
        <begin position="1"/>
        <end position="214"/>
    </location>
</feature>
<sequence length="214" mass="24652">MLRLLLRHHFHCLLLCAVWATPCLASPWSTLTANQNPSPPWSKLTYSKPHDAATFYCPFLYPSPPRSPLQFSGFQQVSTGPECRNETLYLLYNREGQTLVERSSTWVKKVIWYLSGRNQTILQRMPQTASKPSDGNVQISVEDAKIFGAHMVPKQTKLLRFVVNDGTRYQMCVMKLESWAHVFRDYSVSFQVRLTFTEANNQTYTFCTHPNLIV</sequence>
<gene>
    <name type="primary">UL130</name>
</gene>
<dbReference type="EMBL" id="X17403">
    <property type="protein sequence ID" value="CAA35332.1"/>
    <property type="molecule type" value="Genomic_DNA"/>
</dbReference>
<dbReference type="EMBL" id="BK000394">
    <property type="protein sequence ID" value="DAA00116.1"/>
    <property type="molecule type" value="Genomic_DNA"/>
</dbReference>
<dbReference type="PIR" id="S09896">
    <property type="entry name" value="S09896"/>
</dbReference>
<dbReference type="PDB" id="7KBB">
    <property type="method" value="EM"/>
    <property type="resolution" value="4.02 A"/>
    <property type="chains" value="D=26-214"/>
</dbReference>
<dbReference type="PDB" id="7M22">
    <property type="method" value="EM"/>
    <property type="resolution" value="3.65 A"/>
    <property type="chains" value="D=26-214"/>
</dbReference>
<dbReference type="PDB" id="7M30">
    <property type="method" value="EM"/>
    <property type="resolution" value="3.81 A"/>
    <property type="chains" value="D=26-214"/>
</dbReference>
<dbReference type="PDBsum" id="7KBB"/>
<dbReference type="PDBsum" id="7M22"/>
<dbReference type="PDBsum" id="7M30"/>
<dbReference type="SMR" id="P16772"/>
<dbReference type="Proteomes" id="UP000008991">
    <property type="component" value="Segment"/>
</dbReference>
<dbReference type="Proteomes" id="UP000008992">
    <property type="component" value="Segment"/>
</dbReference>
<dbReference type="GO" id="GO:0016020">
    <property type="term" value="C:membrane"/>
    <property type="evidence" value="ECO:0007669"/>
    <property type="project" value="UniProtKB-KW"/>
</dbReference>
<dbReference type="GO" id="GO:0055036">
    <property type="term" value="C:virion membrane"/>
    <property type="evidence" value="ECO:0007669"/>
    <property type="project" value="UniProtKB-SubCell"/>
</dbReference>
<dbReference type="GO" id="GO:0098670">
    <property type="term" value="P:entry receptor-mediated virion attachment to host cell"/>
    <property type="evidence" value="ECO:0007669"/>
    <property type="project" value="UniProtKB-KW"/>
</dbReference>
<dbReference type="GO" id="GO:0046718">
    <property type="term" value="P:symbiont entry into host cell"/>
    <property type="evidence" value="ECO:0007669"/>
    <property type="project" value="UniProtKB-KW"/>
</dbReference>
<dbReference type="InterPro" id="IPR021038">
    <property type="entry name" value="Herpes_UL130_cytomegalovirus"/>
</dbReference>
<dbReference type="Pfam" id="PF11668">
    <property type="entry name" value="Gp_UL130"/>
    <property type="match status" value="1"/>
</dbReference>
<name>UL130_HCMVA</name>
<keyword id="KW-0002">3D-structure</keyword>
<keyword id="KW-0945">Host-virus interaction</keyword>
<keyword id="KW-0472">Membrane</keyword>
<keyword id="KW-1185">Reference proteome</keyword>
<keyword id="KW-1161">Viral attachment to host cell</keyword>
<keyword id="KW-1234">Viral attachment to host entry receptor</keyword>
<keyword id="KW-0946">Virion</keyword>
<keyword id="KW-1160">Virus entry into host cell</keyword>
<accession>P16772</accession>
<accession>Q7M6S0</accession>
<organism>
    <name type="scientific">Human cytomegalovirus (strain AD169)</name>
    <name type="common">HHV-5</name>
    <name type="synonym">Human herpesvirus 5</name>
    <dbReference type="NCBI Taxonomy" id="10360"/>
    <lineage>
        <taxon>Viruses</taxon>
        <taxon>Duplodnaviria</taxon>
        <taxon>Heunggongvirae</taxon>
        <taxon>Peploviricota</taxon>
        <taxon>Herviviricetes</taxon>
        <taxon>Herpesvirales</taxon>
        <taxon>Orthoherpesviridae</taxon>
        <taxon>Betaherpesvirinae</taxon>
        <taxon>Cytomegalovirus</taxon>
        <taxon>Cytomegalovirus humanbeta5</taxon>
        <taxon>Human cytomegalovirus</taxon>
    </lineage>
</organism>
<reference key="1">
    <citation type="journal article" date="1990" name="Curr. Top. Microbiol. Immunol.">
        <title>Analysis of the protein-coding content of the sequence of human cytomegalovirus strain AD169.</title>
        <authorList>
            <person name="Chee M.S."/>
            <person name="Bankier A.T."/>
            <person name="Beck S."/>
            <person name="Bohni R."/>
            <person name="Brown C.M."/>
            <person name="Cerny R."/>
            <person name="Horsnell T."/>
            <person name="Hutchison C.A. III"/>
            <person name="Kouzarides T."/>
            <person name="Martignetti J.A."/>
            <person name="Preddie E."/>
            <person name="Satchwell S.C."/>
            <person name="Tomlinson P."/>
            <person name="Weston K.M."/>
            <person name="Barrell B.G."/>
        </authorList>
    </citation>
    <scope>NUCLEOTIDE SEQUENCE [LARGE SCALE GENOMIC DNA]</scope>
</reference>
<reference key="2">
    <citation type="journal article" date="2003" name="J. Gen. Virol.">
        <title>The human cytomegalovirus genome revisited: comparison with the chimpanzee cytomegalovirus genome.</title>
        <authorList>
            <person name="Davison A.J."/>
            <person name="Dolan A."/>
            <person name="Akter P."/>
            <person name="Addison C."/>
            <person name="Dargan D.J."/>
            <person name="Alcendor D.J."/>
            <person name="McGeoch D.J."/>
            <person name="Hayward G.S."/>
        </authorList>
    </citation>
    <scope>GENOME REANNOTATION</scope>
</reference>
<reference key="3">
    <citation type="journal article" date="2003" name="J. Gen. Virol.">
        <authorList>
            <person name="Davison A.J."/>
            <person name="Dolan A."/>
            <person name="Akter P."/>
            <person name="Addison C."/>
            <person name="Dargan D.J."/>
            <person name="Alcendor D.J."/>
            <person name="McGeoch D.J."/>
            <person name="Hayward G.S."/>
        </authorList>
    </citation>
    <scope>ERRATUM OF PUBMED:12533697</scope>
</reference>
<organismHost>
    <name type="scientific">Homo sapiens</name>
    <name type="common">Human</name>
    <dbReference type="NCBI Taxonomy" id="9606"/>
</organismHost>
<proteinExistence type="evidence at protein level"/>
<evidence type="ECO:0000250" key="1">
    <source>
        <dbReference type="UniProtKB" id="F5HCP3"/>
    </source>
</evidence>
<evidence type="ECO:0000305" key="2"/>
<protein>
    <recommendedName>
        <fullName>Uncharacterized protein UL130</fullName>
    </recommendedName>
</protein>
<comment type="function">
    <text evidence="1">Plays a role in viral entry into host cells. Forms a pentameric complex at the surface of the viral envelope together with gH, gL, UL130 and UL131. This complex is required for entry in epithelial, endothelial and myeloid host cells. Mechanistically, engages host receptor(s) including neurophilin 2/NRP2 to mediate infection.</text>
</comment>
<comment type="subunit">
    <text evidence="1">Forms the envelope pentamer complex (PC) composed of gH, gL, UL128, UL130, and UL131A. The pentamer interacts with host NRP2.</text>
</comment>
<comment type="subcellular location">
    <subcellularLocation>
        <location evidence="1">Virion membrane</location>
    </subcellularLocation>
    <text evidence="1">Found as a pentameric complex at the surface of virion envelope.</text>
</comment>
<comment type="similarity">
    <text evidence="2">Belongs to the HHV-5 UL130 protein family.</text>
</comment>